<organism>
    <name type="scientific">Bacteroides fragilis (strain YCH46)</name>
    <dbReference type="NCBI Taxonomy" id="295405"/>
    <lineage>
        <taxon>Bacteria</taxon>
        <taxon>Pseudomonadati</taxon>
        <taxon>Bacteroidota</taxon>
        <taxon>Bacteroidia</taxon>
        <taxon>Bacteroidales</taxon>
        <taxon>Bacteroidaceae</taxon>
        <taxon>Bacteroides</taxon>
    </lineage>
</organism>
<gene>
    <name type="ordered locus">BF3772</name>
</gene>
<feature type="chain" id="PRO_0000339785" description="UPF0597 protein BF3772">
    <location>
        <begin position="1"/>
        <end position="428"/>
    </location>
</feature>
<dbReference type="EMBL" id="AP006841">
    <property type="protein sequence ID" value="BAD50514.1"/>
    <property type="status" value="ALT_INIT"/>
    <property type="molecule type" value="Genomic_DNA"/>
</dbReference>
<dbReference type="RefSeq" id="WP_005798122.1">
    <property type="nucleotide sequence ID" value="NC_006347.1"/>
</dbReference>
<dbReference type="RefSeq" id="YP_101048.1">
    <property type="nucleotide sequence ID" value="NC_006347.1"/>
</dbReference>
<dbReference type="SMR" id="Q64PR7"/>
<dbReference type="STRING" id="295405.BF3772"/>
<dbReference type="KEGG" id="bfr:BF3772"/>
<dbReference type="PATRIC" id="fig|295405.11.peg.3621"/>
<dbReference type="HOGENOM" id="CLU_051840_0_0_10"/>
<dbReference type="OrthoDB" id="41906at2"/>
<dbReference type="Proteomes" id="UP000002197">
    <property type="component" value="Chromosome"/>
</dbReference>
<dbReference type="GO" id="GO:0080146">
    <property type="term" value="F:L-cysteine desulfhydrase activity"/>
    <property type="evidence" value="ECO:0007669"/>
    <property type="project" value="TreeGrafter"/>
</dbReference>
<dbReference type="GO" id="GO:0019450">
    <property type="term" value="P:L-cysteine catabolic process to pyruvate"/>
    <property type="evidence" value="ECO:0007669"/>
    <property type="project" value="TreeGrafter"/>
</dbReference>
<dbReference type="HAMAP" id="MF_01845">
    <property type="entry name" value="UPF0597"/>
    <property type="match status" value="1"/>
</dbReference>
<dbReference type="InterPro" id="IPR005130">
    <property type="entry name" value="Ser_deHydtase-like_asu"/>
</dbReference>
<dbReference type="InterPro" id="IPR021144">
    <property type="entry name" value="UPF0597"/>
</dbReference>
<dbReference type="PANTHER" id="PTHR30501">
    <property type="entry name" value="UPF0597 PROTEIN YHAM"/>
    <property type="match status" value="1"/>
</dbReference>
<dbReference type="PANTHER" id="PTHR30501:SF2">
    <property type="entry name" value="UPF0597 PROTEIN YHAM"/>
    <property type="match status" value="1"/>
</dbReference>
<dbReference type="Pfam" id="PF03313">
    <property type="entry name" value="SDH_alpha"/>
    <property type="match status" value="1"/>
</dbReference>
<dbReference type="PIRSF" id="PIRSF006054">
    <property type="entry name" value="UCP006054"/>
    <property type="match status" value="1"/>
</dbReference>
<sequence length="428" mass="45710">MTESERKQIIALIQREVIPAIGCTEPIAVALCVAKATETLGAKPEKIKVLLSANILKNAMGVGIPGTGMIGLPIAVALGALIGKSDYQLEVLKDSTPEAVEEGKKLIDEKRICISLKEDITEKLYIEVTCEAGGEQATAIISGGHTTFVYVAKGDEVLLNKQQTSGEEEEEETLELTLRKVYDFALTAPLDEIRFILETARLNKKAAEQSFQGDYGHALGKMLRGTYEHKIMGDSVFSHILSYTSAACDARMAGAMIPVMSNSGSGNQGISATLPVVVYAEENGKSEEELIRALMMSHLTVIYIKQSLGRLSALCGCVVAATGSSCGITWLMGGSYKQVAFAVQNMIANLTGMICDGAKPSCALKVTTGVSTAVLSAVMAMENRCVTSVEGIIDEDVDQSIRNLTRIGSQGMNETDRVVLDIMTHKGC</sequence>
<comment type="similarity">
    <text evidence="1">Belongs to the UPF0597 family.</text>
</comment>
<comment type="sequence caution" evidence="2">
    <conflict type="erroneous initiation">
        <sequence resource="EMBL-CDS" id="BAD50514"/>
    </conflict>
</comment>
<proteinExistence type="inferred from homology"/>
<evidence type="ECO:0000255" key="1">
    <source>
        <dbReference type="HAMAP-Rule" id="MF_01845"/>
    </source>
</evidence>
<evidence type="ECO:0000305" key="2"/>
<accession>Q64PR7</accession>
<name>Y3772_BACFR</name>
<protein>
    <recommendedName>
        <fullName evidence="1">UPF0597 protein BF3772</fullName>
    </recommendedName>
</protein>
<reference key="1">
    <citation type="journal article" date="2004" name="Proc. Natl. Acad. Sci. U.S.A.">
        <title>Genomic analysis of Bacteroides fragilis reveals extensive DNA inversions regulating cell surface adaptation.</title>
        <authorList>
            <person name="Kuwahara T."/>
            <person name="Yamashita A."/>
            <person name="Hirakawa H."/>
            <person name="Nakayama H."/>
            <person name="Toh H."/>
            <person name="Okada N."/>
            <person name="Kuhara S."/>
            <person name="Hattori M."/>
            <person name="Hayashi T."/>
            <person name="Ohnishi Y."/>
        </authorList>
    </citation>
    <scope>NUCLEOTIDE SEQUENCE [LARGE SCALE GENOMIC DNA]</scope>
    <source>
        <strain>YCH46</strain>
    </source>
</reference>